<organism>
    <name type="scientific">Dictyostelium discoideum</name>
    <name type="common">Social amoeba</name>
    <dbReference type="NCBI Taxonomy" id="44689"/>
    <lineage>
        <taxon>Eukaryota</taxon>
        <taxon>Amoebozoa</taxon>
        <taxon>Evosea</taxon>
        <taxon>Eumycetozoa</taxon>
        <taxon>Dictyostelia</taxon>
        <taxon>Dictyosteliales</taxon>
        <taxon>Dictyosteliaceae</taxon>
        <taxon>Dictyostelium</taxon>
    </lineage>
</organism>
<feature type="chain" id="PRO_0000327868" description="DENN domain-containing protein 10">
    <location>
        <begin position="1"/>
        <end position="366"/>
    </location>
</feature>
<feature type="domain" description="uDENN" evidence="2">
    <location>
        <begin position="1"/>
        <end position="147"/>
    </location>
</feature>
<feature type="domain" description="cDENN" evidence="2">
    <location>
        <begin position="169"/>
        <end position="309"/>
    </location>
</feature>
<feature type="domain" description="dDENN" evidence="2">
    <location>
        <begin position="311"/>
        <end position="366"/>
    </location>
</feature>
<accession>Q55FE3</accession>
<dbReference type="EMBL" id="AAFI02000003">
    <property type="protein sequence ID" value="EAL73677.1"/>
    <property type="molecule type" value="Genomic_DNA"/>
</dbReference>
<dbReference type="RefSeq" id="XP_647590.1">
    <property type="nucleotide sequence ID" value="XM_642498.1"/>
</dbReference>
<dbReference type="SMR" id="Q55FE3"/>
<dbReference type="FunCoup" id="Q55FE3">
    <property type="interactions" value="18"/>
</dbReference>
<dbReference type="STRING" id="44689.Q55FE3"/>
<dbReference type="PaxDb" id="44689-DDB0232143"/>
<dbReference type="EnsemblProtists" id="EAL73677">
    <property type="protein sequence ID" value="EAL73677"/>
    <property type="gene ID" value="DDB_G0268448"/>
</dbReference>
<dbReference type="GeneID" id="8616402"/>
<dbReference type="KEGG" id="ddi:DDB_G0268448"/>
<dbReference type="dictyBase" id="DDB_G0268448">
    <property type="gene designation" value="fam45"/>
</dbReference>
<dbReference type="VEuPathDB" id="AmoebaDB:DDB_G0268448"/>
<dbReference type="eggNOG" id="ENOG502QVHR">
    <property type="taxonomic scope" value="Eukaryota"/>
</dbReference>
<dbReference type="HOGENOM" id="CLU_050301_0_0_1"/>
<dbReference type="InParanoid" id="Q55FE3"/>
<dbReference type="OMA" id="HKDIAMF"/>
<dbReference type="PhylomeDB" id="Q55FE3"/>
<dbReference type="PRO" id="PR:Q55FE3"/>
<dbReference type="Proteomes" id="UP000002195">
    <property type="component" value="Chromosome 1"/>
</dbReference>
<dbReference type="GO" id="GO:0005770">
    <property type="term" value="C:late endosome"/>
    <property type="evidence" value="ECO:0000318"/>
    <property type="project" value="GO_Central"/>
</dbReference>
<dbReference type="GO" id="GO:0005085">
    <property type="term" value="F:guanyl-nucleotide exchange factor activity"/>
    <property type="evidence" value="ECO:0000318"/>
    <property type="project" value="GO_Central"/>
</dbReference>
<dbReference type="GO" id="GO:0031267">
    <property type="term" value="F:small GTPase binding"/>
    <property type="evidence" value="ECO:0000318"/>
    <property type="project" value="GO_Central"/>
</dbReference>
<dbReference type="GO" id="GO:0015031">
    <property type="term" value="P:protein transport"/>
    <property type="evidence" value="ECO:0000318"/>
    <property type="project" value="GO_Central"/>
</dbReference>
<dbReference type="GO" id="GO:2000641">
    <property type="term" value="P:regulation of early endosome to late endosome transport"/>
    <property type="evidence" value="ECO:0000318"/>
    <property type="project" value="GO_Central"/>
</dbReference>
<dbReference type="Gene3D" id="3.40.50.11500">
    <property type="match status" value="1"/>
</dbReference>
<dbReference type="InterPro" id="IPR043153">
    <property type="entry name" value="DENN_C"/>
</dbReference>
<dbReference type="InterPro" id="IPR042431">
    <property type="entry name" value="FAM45"/>
</dbReference>
<dbReference type="InterPro" id="IPR037516">
    <property type="entry name" value="Tripartite_DENN"/>
</dbReference>
<dbReference type="PANTHER" id="PTHR28544:SF1">
    <property type="entry name" value="DENN DOMAIN-CONTAINING PROTEIN 10-RELATED"/>
    <property type="match status" value="1"/>
</dbReference>
<dbReference type="PANTHER" id="PTHR28544">
    <property type="entry name" value="PROTEIN FAM45A-RELATED"/>
    <property type="match status" value="1"/>
</dbReference>
<dbReference type="Pfam" id="PF08616">
    <property type="entry name" value="SPA"/>
    <property type="match status" value="1"/>
</dbReference>
<dbReference type="PROSITE" id="PS50211">
    <property type="entry name" value="DENN"/>
    <property type="match status" value="1"/>
</dbReference>
<comment type="function">
    <text evidence="1">Guanine nucleotide exchange factor (GEF) which may be involved in the regulation of homeostasis of late endocytic pathway, including endosomal positioning, maturation and secretion.</text>
</comment>
<comment type="subcellular location">
    <subcellularLocation>
        <location evidence="1">Late endosome</location>
    </subcellularLocation>
</comment>
<comment type="disruption phenotype">
    <text evidence="3">No visible phenotype.</text>
</comment>
<comment type="similarity">
    <text evidence="4">Belongs to the DENND10 family.</text>
</comment>
<proteinExistence type="inferred from homology"/>
<protein>
    <recommendedName>
        <fullName evidence="4">DENN domain-containing protein 10</fullName>
    </recommendedName>
    <alternativeName>
        <fullName>Protein FAM45 homolog</fullName>
    </alternativeName>
</protein>
<evidence type="ECO:0000250" key="1">
    <source>
        <dbReference type="UniProtKB" id="Q8TCE6"/>
    </source>
</evidence>
<evidence type="ECO:0000255" key="2">
    <source>
        <dbReference type="PROSITE-ProRule" id="PRU00304"/>
    </source>
</evidence>
<evidence type="ECO:0000269" key="3">
    <source>
    </source>
</evidence>
<evidence type="ECO:0000305" key="4"/>
<name>DEN10_DICDI</name>
<keyword id="KW-0967">Endosome</keyword>
<keyword id="KW-0344">Guanine-nucleotide releasing factor</keyword>
<keyword id="KW-1185">Reference proteome</keyword>
<reference key="1">
    <citation type="journal article" date="2005" name="Nature">
        <title>The genome of the social amoeba Dictyostelium discoideum.</title>
        <authorList>
            <person name="Eichinger L."/>
            <person name="Pachebat J.A."/>
            <person name="Gloeckner G."/>
            <person name="Rajandream M.A."/>
            <person name="Sucgang R."/>
            <person name="Berriman M."/>
            <person name="Song J."/>
            <person name="Olsen R."/>
            <person name="Szafranski K."/>
            <person name="Xu Q."/>
            <person name="Tunggal B."/>
            <person name="Kummerfeld S."/>
            <person name="Madera M."/>
            <person name="Konfortov B.A."/>
            <person name="Rivero F."/>
            <person name="Bankier A.T."/>
            <person name="Lehmann R."/>
            <person name="Hamlin N."/>
            <person name="Davies R."/>
            <person name="Gaudet P."/>
            <person name="Fey P."/>
            <person name="Pilcher K."/>
            <person name="Chen G."/>
            <person name="Saunders D."/>
            <person name="Sodergren E.J."/>
            <person name="Davis P."/>
            <person name="Kerhornou A."/>
            <person name="Nie X."/>
            <person name="Hall N."/>
            <person name="Anjard C."/>
            <person name="Hemphill L."/>
            <person name="Bason N."/>
            <person name="Farbrother P."/>
            <person name="Desany B."/>
            <person name="Just E."/>
            <person name="Morio T."/>
            <person name="Rost R."/>
            <person name="Churcher C.M."/>
            <person name="Cooper J."/>
            <person name="Haydock S."/>
            <person name="van Driessche N."/>
            <person name="Cronin A."/>
            <person name="Goodhead I."/>
            <person name="Muzny D.M."/>
            <person name="Mourier T."/>
            <person name="Pain A."/>
            <person name="Lu M."/>
            <person name="Harper D."/>
            <person name="Lindsay R."/>
            <person name="Hauser H."/>
            <person name="James K.D."/>
            <person name="Quiles M."/>
            <person name="Madan Babu M."/>
            <person name="Saito T."/>
            <person name="Buchrieser C."/>
            <person name="Wardroper A."/>
            <person name="Felder M."/>
            <person name="Thangavelu M."/>
            <person name="Johnson D."/>
            <person name="Knights A."/>
            <person name="Loulseged H."/>
            <person name="Mungall K.L."/>
            <person name="Oliver K."/>
            <person name="Price C."/>
            <person name="Quail M.A."/>
            <person name="Urushihara H."/>
            <person name="Hernandez J."/>
            <person name="Rabbinowitsch E."/>
            <person name="Steffen D."/>
            <person name="Sanders M."/>
            <person name="Ma J."/>
            <person name="Kohara Y."/>
            <person name="Sharp S."/>
            <person name="Simmonds M.N."/>
            <person name="Spiegler S."/>
            <person name="Tivey A."/>
            <person name="Sugano S."/>
            <person name="White B."/>
            <person name="Walker D."/>
            <person name="Woodward J.R."/>
            <person name="Winckler T."/>
            <person name="Tanaka Y."/>
            <person name="Shaulsky G."/>
            <person name="Schleicher M."/>
            <person name="Weinstock G.M."/>
            <person name="Rosenthal A."/>
            <person name="Cox E.C."/>
            <person name="Chisholm R.L."/>
            <person name="Gibbs R.A."/>
            <person name="Loomis W.F."/>
            <person name="Platzer M."/>
            <person name="Kay R.R."/>
            <person name="Williams J.G."/>
            <person name="Dear P.H."/>
            <person name="Noegel A.A."/>
            <person name="Barrell B.G."/>
            <person name="Kuspa A."/>
        </authorList>
    </citation>
    <scope>NUCLEOTIDE SEQUENCE [LARGE SCALE GENOMIC DNA]</scope>
    <source>
        <strain>AX4</strain>
    </source>
</reference>
<reference key="2">
    <citation type="journal article" date="2006" name="J. Cell Sci.">
        <title>Functional genomics in Dictyostelium: midA, a new conserved protein, is required for mitochondrial function and development.</title>
        <authorList>
            <person name="Torija P."/>
            <person name="Vicente J.J."/>
            <person name="Rodrigues T.B."/>
            <person name="Robles A."/>
            <person name="Cerdan S."/>
            <person name="Sastre L."/>
            <person name="Calvo R.M."/>
            <person name="Escalante R."/>
        </authorList>
    </citation>
    <scope>DISRUPTION PHENOTYPE</scope>
</reference>
<sequence>MATSISLEDSITIFEKDQNSDVLMSWCFPTITEDLKSVILNRTSLLQEKISLQFSFSKFKNSWIYIYTTSVETQQINKEDGSITQINVPDSLKRVVAFSLVLVRNQFNPEKYGSLAQIMSSVYKQTGDCSKLLECQLRVFNRGQFDVGSMGKFVDSSFDVRRSYLQTSIKDIIQLFGEEIILIWSAMAMKKRIVVYSEKLSSLLKVIRALPLFVFHRQNWNILRPFVTISDLELKDLVSTGVYCAGFTDSSIKSREDLYDILVDLSSKEVSVSSQSKDQFILGSFHKDVLRFLLDSLDDEEITDQNVIKGLNLKMKELLTKLESLKETNEETGKSSITLESLETRKLPNGMSTFLFNIANAEGLNG</sequence>
<gene>
    <name type="primary">dennd10</name>
    <name type="synonym">fam45</name>
    <name type="ORF">DDB_G0268448</name>
</gene>